<accession>C5D8U6</accession>
<reference key="1">
    <citation type="submission" date="2009-06" db="EMBL/GenBank/DDBJ databases">
        <title>Complete sequence of chromosome of Geopacillus sp. WCH70.</title>
        <authorList>
            <consortium name="US DOE Joint Genome Institute"/>
            <person name="Lucas S."/>
            <person name="Copeland A."/>
            <person name="Lapidus A."/>
            <person name="Glavina del Rio T."/>
            <person name="Dalin E."/>
            <person name="Tice H."/>
            <person name="Bruce D."/>
            <person name="Goodwin L."/>
            <person name="Pitluck S."/>
            <person name="Chertkov O."/>
            <person name="Brettin T."/>
            <person name="Detter J.C."/>
            <person name="Han C."/>
            <person name="Larimer F."/>
            <person name="Land M."/>
            <person name="Hauser L."/>
            <person name="Kyrpides N."/>
            <person name="Mikhailova N."/>
            <person name="Brumm P."/>
            <person name="Mead D.A."/>
            <person name="Richardson P."/>
        </authorList>
    </citation>
    <scope>NUCLEOTIDE SEQUENCE [LARGE SCALE GENOMIC DNA]</scope>
    <source>
        <strain>WCH70</strain>
    </source>
</reference>
<sequence length="116" mass="13514">MMHHLIQEITKEQLRTDLPDFRPGDTVRVHVKVIEGNRERIQVFEGVVIKRRGAGISETFTVRKVSYGVGVERTFPVHTPKIAKLEVVRRGKVRRAKLYYLRQLRGKAARIKEIVR</sequence>
<gene>
    <name evidence="1" type="primary">rplS</name>
    <name type="ordered locus">GWCH70_1093</name>
</gene>
<name>RL19_GEOSW</name>
<feature type="chain" id="PRO_1000205892" description="Large ribosomal subunit protein bL19">
    <location>
        <begin position="1"/>
        <end position="116"/>
    </location>
</feature>
<evidence type="ECO:0000255" key="1">
    <source>
        <dbReference type="HAMAP-Rule" id="MF_00402"/>
    </source>
</evidence>
<evidence type="ECO:0000305" key="2"/>
<organism>
    <name type="scientific">Geobacillus sp. (strain WCH70)</name>
    <dbReference type="NCBI Taxonomy" id="471223"/>
    <lineage>
        <taxon>Bacteria</taxon>
        <taxon>Bacillati</taxon>
        <taxon>Bacillota</taxon>
        <taxon>Bacilli</taxon>
        <taxon>Bacillales</taxon>
        <taxon>Anoxybacillaceae</taxon>
        <taxon>Geobacillus</taxon>
    </lineage>
</organism>
<dbReference type="EMBL" id="CP001638">
    <property type="protein sequence ID" value="ACS23953.1"/>
    <property type="molecule type" value="Genomic_DNA"/>
</dbReference>
<dbReference type="SMR" id="C5D8U6"/>
<dbReference type="STRING" id="471223.GWCH70_1093"/>
<dbReference type="KEGG" id="gwc:GWCH70_1093"/>
<dbReference type="eggNOG" id="COG0335">
    <property type="taxonomic scope" value="Bacteria"/>
</dbReference>
<dbReference type="HOGENOM" id="CLU_103507_2_1_9"/>
<dbReference type="GO" id="GO:0022625">
    <property type="term" value="C:cytosolic large ribosomal subunit"/>
    <property type="evidence" value="ECO:0007669"/>
    <property type="project" value="TreeGrafter"/>
</dbReference>
<dbReference type="GO" id="GO:0003735">
    <property type="term" value="F:structural constituent of ribosome"/>
    <property type="evidence" value="ECO:0007669"/>
    <property type="project" value="InterPro"/>
</dbReference>
<dbReference type="GO" id="GO:0006412">
    <property type="term" value="P:translation"/>
    <property type="evidence" value="ECO:0007669"/>
    <property type="project" value="UniProtKB-UniRule"/>
</dbReference>
<dbReference type="FunFam" id="2.30.30.790:FF:000001">
    <property type="entry name" value="50S ribosomal protein L19"/>
    <property type="match status" value="1"/>
</dbReference>
<dbReference type="Gene3D" id="2.30.30.790">
    <property type="match status" value="1"/>
</dbReference>
<dbReference type="HAMAP" id="MF_00402">
    <property type="entry name" value="Ribosomal_bL19"/>
    <property type="match status" value="1"/>
</dbReference>
<dbReference type="InterPro" id="IPR001857">
    <property type="entry name" value="Ribosomal_bL19"/>
</dbReference>
<dbReference type="InterPro" id="IPR018257">
    <property type="entry name" value="Ribosomal_bL19_CS"/>
</dbReference>
<dbReference type="InterPro" id="IPR038657">
    <property type="entry name" value="Ribosomal_bL19_sf"/>
</dbReference>
<dbReference type="InterPro" id="IPR008991">
    <property type="entry name" value="Translation_prot_SH3-like_sf"/>
</dbReference>
<dbReference type="NCBIfam" id="TIGR01024">
    <property type="entry name" value="rplS_bact"/>
    <property type="match status" value="1"/>
</dbReference>
<dbReference type="PANTHER" id="PTHR15680:SF9">
    <property type="entry name" value="LARGE RIBOSOMAL SUBUNIT PROTEIN BL19M"/>
    <property type="match status" value="1"/>
</dbReference>
<dbReference type="PANTHER" id="PTHR15680">
    <property type="entry name" value="RIBOSOMAL PROTEIN L19"/>
    <property type="match status" value="1"/>
</dbReference>
<dbReference type="Pfam" id="PF01245">
    <property type="entry name" value="Ribosomal_L19"/>
    <property type="match status" value="1"/>
</dbReference>
<dbReference type="PIRSF" id="PIRSF002191">
    <property type="entry name" value="Ribosomal_L19"/>
    <property type="match status" value="1"/>
</dbReference>
<dbReference type="PRINTS" id="PR00061">
    <property type="entry name" value="RIBOSOMALL19"/>
</dbReference>
<dbReference type="SUPFAM" id="SSF50104">
    <property type="entry name" value="Translation proteins SH3-like domain"/>
    <property type="match status" value="1"/>
</dbReference>
<dbReference type="PROSITE" id="PS01015">
    <property type="entry name" value="RIBOSOMAL_L19"/>
    <property type="match status" value="1"/>
</dbReference>
<comment type="function">
    <text evidence="1">This protein is located at the 30S-50S ribosomal subunit interface and may play a role in the structure and function of the aminoacyl-tRNA binding site.</text>
</comment>
<comment type="similarity">
    <text evidence="1">Belongs to the bacterial ribosomal protein bL19 family.</text>
</comment>
<protein>
    <recommendedName>
        <fullName evidence="1">Large ribosomal subunit protein bL19</fullName>
    </recommendedName>
    <alternativeName>
        <fullName evidence="2">50S ribosomal protein L19</fullName>
    </alternativeName>
</protein>
<proteinExistence type="inferred from homology"/>
<keyword id="KW-0687">Ribonucleoprotein</keyword>
<keyword id="KW-0689">Ribosomal protein</keyword>